<proteinExistence type="inferred from homology"/>
<keyword id="KW-0150">Chloroplast</keyword>
<keyword id="KW-0934">Plastid</keyword>
<keyword id="KW-0687">Ribonucleoprotein</keyword>
<keyword id="KW-0689">Ribosomal protein</keyword>
<keyword id="KW-0694">RNA-binding</keyword>
<keyword id="KW-0699">rRNA-binding</keyword>
<protein>
    <recommendedName>
        <fullName evidence="2">Small ribosomal subunit protein uS4c</fullName>
    </recommendedName>
    <alternativeName>
        <fullName>30S ribosomal protein S4, chloroplastic</fullName>
    </alternativeName>
</protein>
<sequence length="207" mass="23961">MSRYRGPRLRIIRRLRNLPGLTNKLVESKKNQASGNDQSNQKKVSQYCIRLEAKQRLRFNYGLTERQLLNYVRIARCAKGSTGQILLQLLEMRLDNILFRLGVVPTIPSARQLINHRHILVNNRIVDIPSFHCKPKDIITIGAPKTYQSIITKRIEAFAKDQIPDHLTLSLSEQKKPKGFVNYLINRESIGLKINELLVVEYYSRKA</sequence>
<comment type="function">
    <text evidence="1">One of the primary rRNA binding proteins, it binds directly to 16S rRNA where it nucleates assembly of the body of the 30S subunit.</text>
</comment>
<comment type="function">
    <text evidence="1">With S5 and S12 plays an important role in translational accuracy.</text>
</comment>
<comment type="subunit">
    <text evidence="1">Part of the 30S ribosomal subunit. Contacts protein S5. The interaction surface between S4 and S5 is involved in control of translational fidelity (By similarity).</text>
</comment>
<comment type="subcellular location">
    <subcellularLocation>
        <location>Plastid</location>
        <location>Chloroplast</location>
    </subcellularLocation>
</comment>
<comment type="similarity">
    <text evidence="2">Belongs to the universal ribosomal protein uS4 family.</text>
</comment>
<evidence type="ECO:0000250" key="1"/>
<evidence type="ECO:0000305" key="2"/>
<dbReference type="EMBL" id="AJ583680">
    <property type="protein sequence ID" value="CAE47534.1"/>
    <property type="molecule type" value="Genomic_DNA"/>
</dbReference>
<dbReference type="SMR" id="Q6H9L3"/>
<dbReference type="GO" id="GO:0009507">
    <property type="term" value="C:chloroplast"/>
    <property type="evidence" value="ECO:0007669"/>
    <property type="project" value="UniProtKB-SubCell"/>
</dbReference>
<dbReference type="GO" id="GO:0015935">
    <property type="term" value="C:small ribosomal subunit"/>
    <property type="evidence" value="ECO:0007669"/>
    <property type="project" value="InterPro"/>
</dbReference>
<dbReference type="GO" id="GO:0019843">
    <property type="term" value="F:rRNA binding"/>
    <property type="evidence" value="ECO:0007669"/>
    <property type="project" value="UniProtKB-UniRule"/>
</dbReference>
<dbReference type="GO" id="GO:0003735">
    <property type="term" value="F:structural constituent of ribosome"/>
    <property type="evidence" value="ECO:0007669"/>
    <property type="project" value="InterPro"/>
</dbReference>
<dbReference type="GO" id="GO:0042274">
    <property type="term" value="P:ribosomal small subunit biogenesis"/>
    <property type="evidence" value="ECO:0007669"/>
    <property type="project" value="TreeGrafter"/>
</dbReference>
<dbReference type="GO" id="GO:0006412">
    <property type="term" value="P:translation"/>
    <property type="evidence" value="ECO:0007669"/>
    <property type="project" value="UniProtKB-UniRule"/>
</dbReference>
<dbReference type="CDD" id="cd00165">
    <property type="entry name" value="S4"/>
    <property type="match status" value="1"/>
</dbReference>
<dbReference type="FunFam" id="3.10.290.10:FF:000001">
    <property type="entry name" value="30S ribosomal protein S4"/>
    <property type="match status" value="1"/>
</dbReference>
<dbReference type="FunFam" id="1.10.1050.10:FF:000002">
    <property type="entry name" value="30S ribosomal protein S4, chloroplastic"/>
    <property type="match status" value="1"/>
</dbReference>
<dbReference type="Gene3D" id="1.10.1050.10">
    <property type="entry name" value="Ribosomal Protein S4 Delta 41, Chain A, domain 1"/>
    <property type="match status" value="1"/>
</dbReference>
<dbReference type="Gene3D" id="3.10.290.10">
    <property type="entry name" value="RNA-binding S4 domain"/>
    <property type="match status" value="1"/>
</dbReference>
<dbReference type="HAMAP" id="MF_01306_B">
    <property type="entry name" value="Ribosomal_uS4_B"/>
    <property type="match status" value="1"/>
</dbReference>
<dbReference type="InterPro" id="IPR022801">
    <property type="entry name" value="Ribosomal_uS4"/>
</dbReference>
<dbReference type="InterPro" id="IPR005709">
    <property type="entry name" value="Ribosomal_uS4_bac-type"/>
</dbReference>
<dbReference type="InterPro" id="IPR018079">
    <property type="entry name" value="Ribosomal_uS4_CS"/>
</dbReference>
<dbReference type="InterPro" id="IPR001912">
    <property type="entry name" value="Ribosomal_uS4_N"/>
</dbReference>
<dbReference type="InterPro" id="IPR002942">
    <property type="entry name" value="S4_RNA-bd"/>
</dbReference>
<dbReference type="InterPro" id="IPR036986">
    <property type="entry name" value="S4_RNA-bd_sf"/>
</dbReference>
<dbReference type="NCBIfam" id="NF003717">
    <property type="entry name" value="PRK05327.1"/>
    <property type="match status" value="1"/>
</dbReference>
<dbReference type="NCBIfam" id="TIGR01017">
    <property type="entry name" value="rpsD_bact"/>
    <property type="match status" value="1"/>
</dbReference>
<dbReference type="PANTHER" id="PTHR11831">
    <property type="entry name" value="30S 40S RIBOSOMAL PROTEIN"/>
    <property type="match status" value="1"/>
</dbReference>
<dbReference type="PANTHER" id="PTHR11831:SF4">
    <property type="entry name" value="SMALL RIBOSOMAL SUBUNIT PROTEIN US4M"/>
    <property type="match status" value="1"/>
</dbReference>
<dbReference type="Pfam" id="PF00163">
    <property type="entry name" value="Ribosomal_S4"/>
    <property type="match status" value="1"/>
</dbReference>
<dbReference type="Pfam" id="PF01479">
    <property type="entry name" value="S4"/>
    <property type="match status" value="1"/>
</dbReference>
<dbReference type="SMART" id="SM01390">
    <property type="entry name" value="Ribosomal_S4"/>
    <property type="match status" value="1"/>
</dbReference>
<dbReference type="SMART" id="SM00363">
    <property type="entry name" value="S4"/>
    <property type="match status" value="1"/>
</dbReference>
<dbReference type="SUPFAM" id="SSF55174">
    <property type="entry name" value="Alpha-L RNA-binding motif"/>
    <property type="match status" value="1"/>
</dbReference>
<dbReference type="PROSITE" id="PS00632">
    <property type="entry name" value="RIBOSOMAL_S4"/>
    <property type="match status" value="1"/>
</dbReference>
<dbReference type="PROSITE" id="PS50889">
    <property type="entry name" value="S4"/>
    <property type="match status" value="1"/>
</dbReference>
<accession>Q6H9L3</accession>
<organism>
    <name type="scientific">Equisetum fluviatile</name>
    <name type="common">Water horsetail</name>
    <dbReference type="NCBI Taxonomy" id="231680"/>
    <lineage>
        <taxon>Eukaryota</taxon>
        <taxon>Viridiplantae</taxon>
        <taxon>Streptophyta</taxon>
        <taxon>Embryophyta</taxon>
        <taxon>Tracheophyta</taxon>
        <taxon>Polypodiopsida</taxon>
        <taxon>Equisetidae</taxon>
        <taxon>Equisetales</taxon>
        <taxon>Equisetaceae</taxon>
        <taxon>Equisetum</taxon>
    </lineage>
</organism>
<reference key="1">
    <citation type="journal article" date="2004" name="Syst. Bot.">
        <title>Phylogeny of horsetails (Equisetum) based on the chloroplast rps4 gene and adjacent noncoding sequences.</title>
        <authorList>
            <person name="Guillon J.-M."/>
        </authorList>
        <dbReference type="AGRICOLA" id="IND43653535"/>
    </citation>
    <scope>NUCLEOTIDE SEQUENCE [GENOMIC DNA]</scope>
</reference>
<gene>
    <name type="primary">rps4</name>
</gene>
<name>RR4_EQUFL</name>
<geneLocation type="chloroplast"/>
<feature type="chain" id="PRO_0000132575" description="Small ribosomal subunit protein uS4c">
    <location>
        <begin position="1"/>
        <end position="207"/>
    </location>
</feature>
<feature type="domain" description="S4 RNA-binding">
    <location>
        <begin position="92"/>
        <end position="156"/>
    </location>
</feature>